<sequence>MNKEERAKRQSKIRNFSIIAHIDHGKSTLADRILEKTNALTQREMKAQLLDSMDLERERGITIKLNAVQLNYKAKDGEEYILHLIDTPGHVDFTYEVSRSLAACEGAILVVDAAQGIEAQTLANVYLALDNNLEILPVINKIDLPSADPERVRQEVEDVIGLDASEAVLASAKAGIGIEEILEQIVEKVPAPTGDSEEPLQCMIFDSLYDPYRGVIAYIRVVNGTVKVGDKVRMMATGKEFEVTEVGVFTPKTTQRDELTVGDVGFLAASIKNVGDTRVGDTITHAKRPAAEPLAGYRKLNPMVFCGLYPIDSARYNDLRDALEKLELNDSALEFEPETSQALGFGFRCGFLGLLHMEIIQERIEREFKIDLITTAPSVIYKVFLTNGEDMIVDNPSNMPNPQTIDRVEEPFVKAAIMVPNDYVGAVMEICQGKRGTFIDMQYLDETRVTLTYEIPLSEIVYDFFDQLKSNTKGYASFDYELIGYKPSKLVKMDILLNSEQVDALSFIVHRDSAYDRGKVIVEKLKELIPRQQFEVPIQATIGNKVVARSTIKAMRKNVLAKCYGGDISRKRKLLDKQKEGKKRMKSVGSVEVPQEAFMAVLKMDDN</sequence>
<gene>
    <name evidence="1" type="primary">lepA</name>
    <name type="ordered locus">BCQ_4105</name>
</gene>
<protein>
    <recommendedName>
        <fullName evidence="1">Elongation factor 4</fullName>
        <shortName evidence="1">EF-4</shortName>
        <ecNumber evidence="1">3.6.5.n1</ecNumber>
    </recommendedName>
    <alternativeName>
        <fullName evidence="1">Ribosomal back-translocase LepA</fullName>
    </alternativeName>
</protein>
<feature type="chain" id="PRO_1000118036" description="Elongation factor 4">
    <location>
        <begin position="1"/>
        <end position="607"/>
    </location>
</feature>
<feature type="domain" description="tr-type G">
    <location>
        <begin position="11"/>
        <end position="193"/>
    </location>
</feature>
<feature type="binding site" evidence="1">
    <location>
        <begin position="23"/>
        <end position="28"/>
    </location>
    <ligand>
        <name>GTP</name>
        <dbReference type="ChEBI" id="CHEBI:37565"/>
    </ligand>
</feature>
<feature type="binding site" evidence="1">
    <location>
        <begin position="140"/>
        <end position="143"/>
    </location>
    <ligand>
        <name>GTP</name>
        <dbReference type="ChEBI" id="CHEBI:37565"/>
    </ligand>
</feature>
<comment type="function">
    <text evidence="1">Required for accurate and efficient protein synthesis under certain stress conditions. May act as a fidelity factor of the translation reaction, by catalyzing a one-codon backward translocation of tRNAs on improperly translocated ribosomes. Back-translocation proceeds from a post-translocation (POST) complex to a pre-translocation (PRE) complex, thus giving elongation factor G a second chance to translocate the tRNAs correctly. Binds to ribosomes in a GTP-dependent manner.</text>
</comment>
<comment type="catalytic activity">
    <reaction evidence="1">
        <text>GTP + H2O = GDP + phosphate + H(+)</text>
        <dbReference type="Rhea" id="RHEA:19669"/>
        <dbReference type="ChEBI" id="CHEBI:15377"/>
        <dbReference type="ChEBI" id="CHEBI:15378"/>
        <dbReference type="ChEBI" id="CHEBI:37565"/>
        <dbReference type="ChEBI" id="CHEBI:43474"/>
        <dbReference type="ChEBI" id="CHEBI:58189"/>
        <dbReference type="EC" id="3.6.5.n1"/>
    </reaction>
</comment>
<comment type="subcellular location">
    <subcellularLocation>
        <location evidence="1">Cell membrane</location>
        <topology evidence="1">Peripheral membrane protein</topology>
        <orientation evidence="1">Cytoplasmic side</orientation>
    </subcellularLocation>
</comment>
<comment type="similarity">
    <text evidence="1">Belongs to the TRAFAC class translation factor GTPase superfamily. Classic translation factor GTPase family. LepA subfamily.</text>
</comment>
<name>LEPA_BACCQ</name>
<organism>
    <name type="scientific">Bacillus cereus (strain Q1)</name>
    <dbReference type="NCBI Taxonomy" id="361100"/>
    <lineage>
        <taxon>Bacteria</taxon>
        <taxon>Bacillati</taxon>
        <taxon>Bacillota</taxon>
        <taxon>Bacilli</taxon>
        <taxon>Bacillales</taxon>
        <taxon>Bacillaceae</taxon>
        <taxon>Bacillus</taxon>
        <taxon>Bacillus cereus group</taxon>
    </lineage>
</organism>
<accession>B9IY86</accession>
<evidence type="ECO:0000255" key="1">
    <source>
        <dbReference type="HAMAP-Rule" id="MF_00071"/>
    </source>
</evidence>
<dbReference type="EC" id="3.6.5.n1" evidence="1"/>
<dbReference type="EMBL" id="CP000227">
    <property type="protein sequence ID" value="ACM14532.1"/>
    <property type="molecule type" value="Genomic_DNA"/>
</dbReference>
<dbReference type="SMR" id="B9IY86"/>
<dbReference type="KEGG" id="bcq:BCQ_4105"/>
<dbReference type="HOGENOM" id="CLU_009995_3_3_9"/>
<dbReference type="Proteomes" id="UP000000441">
    <property type="component" value="Chromosome"/>
</dbReference>
<dbReference type="GO" id="GO:0005886">
    <property type="term" value="C:plasma membrane"/>
    <property type="evidence" value="ECO:0007669"/>
    <property type="project" value="UniProtKB-SubCell"/>
</dbReference>
<dbReference type="GO" id="GO:0005525">
    <property type="term" value="F:GTP binding"/>
    <property type="evidence" value="ECO:0007669"/>
    <property type="project" value="UniProtKB-UniRule"/>
</dbReference>
<dbReference type="GO" id="GO:0003924">
    <property type="term" value="F:GTPase activity"/>
    <property type="evidence" value="ECO:0007669"/>
    <property type="project" value="UniProtKB-UniRule"/>
</dbReference>
<dbReference type="GO" id="GO:0043022">
    <property type="term" value="F:ribosome binding"/>
    <property type="evidence" value="ECO:0007669"/>
    <property type="project" value="UniProtKB-UniRule"/>
</dbReference>
<dbReference type="GO" id="GO:0003746">
    <property type="term" value="F:translation elongation factor activity"/>
    <property type="evidence" value="ECO:0007669"/>
    <property type="project" value="UniProtKB-UniRule"/>
</dbReference>
<dbReference type="GO" id="GO:0045727">
    <property type="term" value="P:positive regulation of translation"/>
    <property type="evidence" value="ECO:0007669"/>
    <property type="project" value="UniProtKB-UniRule"/>
</dbReference>
<dbReference type="CDD" id="cd03699">
    <property type="entry name" value="EF4_II"/>
    <property type="match status" value="1"/>
</dbReference>
<dbReference type="CDD" id="cd16260">
    <property type="entry name" value="EF4_III"/>
    <property type="match status" value="1"/>
</dbReference>
<dbReference type="CDD" id="cd01890">
    <property type="entry name" value="LepA"/>
    <property type="match status" value="1"/>
</dbReference>
<dbReference type="CDD" id="cd03709">
    <property type="entry name" value="lepA_C"/>
    <property type="match status" value="1"/>
</dbReference>
<dbReference type="FunFam" id="3.40.50.300:FF:000078">
    <property type="entry name" value="Elongation factor 4"/>
    <property type="match status" value="1"/>
</dbReference>
<dbReference type="FunFam" id="2.40.30.10:FF:000015">
    <property type="entry name" value="Translation factor GUF1, mitochondrial"/>
    <property type="match status" value="1"/>
</dbReference>
<dbReference type="FunFam" id="3.30.70.240:FF:000007">
    <property type="entry name" value="Translation factor GUF1, mitochondrial"/>
    <property type="match status" value="1"/>
</dbReference>
<dbReference type="FunFam" id="3.30.70.2570:FF:000001">
    <property type="entry name" value="Translation factor GUF1, mitochondrial"/>
    <property type="match status" value="1"/>
</dbReference>
<dbReference type="FunFam" id="3.30.70.870:FF:000004">
    <property type="entry name" value="Translation factor GUF1, mitochondrial"/>
    <property type="match status" value="1"/>
</dbReference>
<dbReference type="Gene3D" id="3.30.70.240">
    <property type="match status" value="1"/>
</dbReference>
<dbReference type="Gene3D" id="3.30.70.2570">
    <property type="entry name" value="Elongation factor 4, C-terminal domain"/>
    <property type="match status" value="1"/>
</dbReference>
<dbReference type="Gene3D" id="3.30.70.870">
    <property type="entry name" value="Elongation Factor G (Translational Gtpase), domain 3"/>
    <property type="match status" value="1"/>
</dbReference>
<dbReference type="Gene3D" id="3.40.50.300">
    <property type="entry name" value="P-loop containing nucleotide triphosphate hydrolases"/>
    <property type="match status" value="1"/>
</dbReference>
<dbReference type="Gene3D" id="2.40.30.10">
    <property type="entry name" value="Translation factors"/>
    <property type="match status" value="1"/>
</dbReference>
<dbReference type="HAMAP" id="MF_00071">
    <property type="entry name" value="LepA"/>
    <property type="match status" value="1"/>
</dbReference>
<dbReference type="InterPro" id="IPR006297">
    <property type="entry name" value="EF-4"/>
</dbReference>
<dbReference type="InterPro" id="IPR035647">
    <property type="entry name" value="EFG_III/V"/>
</dbReference>
<dbReference type="InterPro" id="IPR000640">
    <property type="entry name" value="EFG_V-like"/>
</dbReference>
<dbReference type="InterPro" id="IPR004161">
    <property type="entry name" value="EFTu-like_2"/>
</dbReference>
<dbReference type="InterPro" id="IPR031157">
    <property type="entry name" value="G_TR_CS"/>
</dbReference>
<dbReference type="InterPro" id="IPR038363">
    <property type="entry name" value="LepA_C_sf"/>
</dbReference>
<dbReference type="InterPro" id="IPR013842">
    <property type="entry name" value="LepA_CTD"/>
</dbReference>
<dbReference type="InterPro" id="IPR035654">
    <property type="entry name" value="LepA_IV"/>
</dbReference>
<dbReference type="InterPro" id="IPR027417">
    <property type="entry name" value="P-loop_NTPase"/>
</dbReference>
<dbReference type="InterPro" id="IPR005225">
    <property type="entry name" value="Small_GTP-bd"/>
</dbReference>
<dbReference type="InterPro" id="IPR000795">
    <property type="entry name" value="T_Tr_GTP-bd_dom"/>
</dbReference>
<dbReference type="NCBIfam" id="TIGR01393">
    <property type="entry name" value="lepA"/>
    <property type="match status" value="1"/>
</dbReference>
<dbReference type="NCBIfam" id="TIGR00231">
    <property type="entry name" value="small_GTP"/>
    <property type="match status" value="1"/>
</dbReference>
<dbReference type="PANTHER" id="PTHR43512:SF4">
    <property type="entry name" value="TRANSLATION FACTOR GUF1 HOMOLOG, CHLOROPLASTIC"/>
    <property type="match status" value="1"/>
</dbReference>
<dbReference type="PANTHER" id="PTHR43512">
    <property type="entry name" value="TRANSLATION FACTOR GUF1-RELATED"/>
    <property type="match status" value="1"/>
</dbReference>
<dbReference type="Pfam" id="PF00679">
    <property type="entry name" value="EFG_C"/>
    <property type="match status" value="1"/>
</dbReference>
<dbReference type="Pfam" id="PF00009">
    <property type="entry name" value="GTP_EFTU"/>
    <property type="match status" value="1"/>
</dbReference>
<dbReference type="Pfam" id="PF03144">
    <property type="entry name" value="GTP_EFTU_D2"/>
    <property type="match status" value="1"/>
</dbReference>
<dbReference type="Pfam" id="PF06421">
    <property type="entry name" value="LepA_C"/>
    <property type="match status" value="1"/>
</dbReference>
<dbReference type="PRINTS" id="PR00315">
    <property type="entry name" value="ELONGATNFCT"/>
</dbReference>
<dbReference type="SMART" id="SM00838">
    <property type="entry name" value="EFG_C"/>
    <property type="match status" value="1"/>
</dbReference>
<dbReference type="SUPFAM" id="SSF54980">
    <property type="entry name" value="EF-G C-terminal domain-like"/>
    <property type="match status" value="2"/>
</dbReference>
<dbReference type="SUPFAM" id="SSF52540">
    <property type="entry name" value="P-loop containing nucleoside triphosphate hydrolases"/>
    <property type="match status" value="1"/>
</dbReference>
<dbReference type="PROSITE" id="PS00301">
    <property type="entry name" value="G_TR_1"/>
    <property type="match status" value="1"/>
</dbReference>
<dbReference type="PROSITE" id="PS51722">
    <property type="entry name" value="G_TR_2"/>
    <property type="match status" value="1"/>
</dbReference>
<keyword id="KW-1003">Cell membrane</keyword>
<keyword id="KW-0342">GTP-binding</keyword>
<keyword id="KW-0378">Hydrolase</keyword>
<keyword id="KW-0472">Membrane</keyword>
<keyword id="KW-0547">Nucleotide-binding</keyword>
<keyword id="KW-0648">Protein biosynthesis</keyword>
<reference key="1">
    <citation type="journal article" date="2009" name="J. Bacteriol.">
        <title>Complete genome sequence of the extremophilic Bacillus cereus strain Q1 with industrial applications.</title>
        <authorList>
            <person name="Xiong Z."/>
            <person name="Jiang Y."/>
            <person name="Qi D."/>
            <person name="Lu H."/>
            <person name="Yang F."/>
            <person name="Yang J."/>
            <person name="Chen L."/>
            <person name="Sun L."/>
            <person name="Xu X."/>
            <person name="Xue Y."/>
            <person name="Zhu Y."/>
            <person name="Jin Q."/>
        </authorList>
    </citation>
    <scope>NUCLEOTIDE SEQUENCE [LARGE SCALE GENOMIC DNA]</scope>
    <source>
        <strain>Q1</strain>
    </source>
</reference>
<proteinExistence type="inferred from homology"/>